<proteinExistence type="inferred from homology"/>
<comment type="function">
    <text evidence="1">Fluoride-specific ion channel. Important for reducing fluoride concentration in the cell, thus reducing its toxicity.</text>
</comment>
<comment type="catalytic activity">
    <reaction evidence="1">
        <text>fluoride(in) = fluoride(out)</text>
        <dbReference type="Rhea" id="RHEA:76159"/>
        <dbReference type="ChEBI" id="CHEBI:17051"/>
    </reaction>
    <physiologicalReaction direction="left-to-right" evidence="1">
        <dbReference type="Rhea" id="RHEA:76160"/>
    </physiologicalReaction>
</comment>
<comment type="activity regulation">
    <text evidence="1">Na(+) is not transported, but it plays an essential structural role and its presence is essential for fluoride channel function.</text>
</comment>
<comment type="subcellular location">
    <subcellularLocation>
        <location evidence="1">Cell inner membrane</location>
        <topology evidence="1">Multi-pass membrane protein</topology>
    </subcellularLocation>
</comment>
<comment type="similarity">
    <text evidence="1">Belongs to the fluoride channel Fluc/FEX (TC 1.A.43) family.</text>
</comment>
<feature type="chain" id="PRO_1000206257" description="Fluoride-specific ion channel FluC">
    <location>
        <begin position="1"/>
        <end position="127"/>
    </location>
</feature>
<feature type="transmembrane region" description="Helical" evidence="1">
    <location>
        <begin position="4"/>
        <end position="24"/>
    </location>
</feature>
<feature type="transmembrane region" description="Helical" evidence="1">
    <location>
        <begin position="35"/>
        <end position="55"/>
    </location>
</feature>
<feature type="transmembrane region" description="Helical" evidence="1">
    <location>
        <begin position="71"/>
        <end position="91"/>
    </location>
</feature>
<feature type="transmembrane region" description="Helical" evidence="1">
    <location>
        <begin position="103"/>
        <end position="123"/>
    </location>
</feature>
<feature type="binding site" evidence="1">
    <location>
        <position position="75"/>
    </location>
    <ligand>
        <name>Na(+)</name>
        <dbReference type="ChEBI" id="CHEBI:29101"/>
        <note>structural</note>
    </ligand>
</feature>
<feature type="binding site" evidence="1">
    <location>
        <position position="78"/>
    </location>
    <ligand>
        <name>Na(+)</name>
        <dbReference type="ChEBI" id="CHEBI:29101"/>
        <note>structural</note>
    </ligand>
</feature>
<dbReference type="EMBL" id="CP001657">
    <property type="protein sequence ID" value="ACT12221.1"/>
    <property type="molecule type" value="Genomic_DNA"/>
</dbReference>
<dbReference type="RefSeq" id="WP_015839459.1">
    <property type="nucleotide sequence ID" value="NC_012917.1"/>
</dbReference>
<dbReference type="SMR" id="C6DBV4"/>
<dbReference type="KEGG" id="pct:PC1_1173"/>
<dbReference type="eggNOG" id="COG0239">
    <property type="taxonomic scope" value="Bacteria"/>
</dbReference>
<dbReference type="HOGENOM" id="CLU_114342_3_3_6"/>
<dbReference type="OrthoDB" id="9806299at2"/>
<dbReference type="Proteomes" id="UP000002736">
    <property type="component" value="Chromosome"/>
</dbReference>
<dbReference type="GO" id="GO:0005886">
    <property type="term" value="C:plasma membrane"/>
    <property type="evidence" value="ECO:0007669"/>
    <property type="project" value="UniProtKB-SubCell"/>
</dbReference>
<dbReference type="GO" id="GO:0062054">
    <property type="term" value="F:fluoride channel activity"/>
    <property type="evidence" value="ECO:0007669"/>
    <property type="project" value="UniProtKB-UniRule"/>
</dbReference>
<dbReference type="GO" id="GO:0046872">
    <property type="term" value="F:metal ion binding"/>
    <property type="evidence" value="ECO:0007669"/>
    <property type="project" value="UniProtKB-KW"/>
</dbReference>
<dbReference type="GO" id="GO:0140114">
    <property type="term" value="P:cellular detoxification of fluoride"/>
    <property type="evidence" value="ECO:0007669"/>
    <property type="project" value="UniProtKB-UniRule"/>
</dbReference>
<dbReference type="HAMAP" id="MF_00454">
    <property type="entry name" value="FluC"/>
    <property type="match status" value="1"/>
</dbReference>
<dbReference type="InterPro" id="IPR003691">
    <property type="entry name" value="FluC"/>
</dbReference>
<dbReference type="NCBIfam" id="TIGR00494">
    <property type="entry name" value="crcB"/>
    <property type="match status" value="1"/>
</dbReference>
<dbReference type="NCBIfam" id="NF010792">
    <property type="entry name" value="PRK14196.1"/>
    <property type="match status" value="1"/>
</dbReference>
<dbReference type="PANTHER" id="PTHR28259">
    <property type="entry name" value="FLUORIDE EXPORT PROTEIN 1-RELATED"/>
    <property type="match status" value="1"/>
</dbReference>
<dbReference type="PANTHER" id="PTHR28259:SF1">
    <property type="entry name" value="FLUORIDE EXPORT PROTEIN 1-RELATED"/>
    <property type="match status" value="1"/>
</dbReference>
<dbReference type="Pfam" id="PF02537">
    <property type="entry name" value="CRCB"/>
    <property type="match status" value="1"/>
</dbReference>
<reference key="1">
    <citation type="submission" date="2009-07" db="EMBL/GenBank/DDBJ databases">
        <title>Complete sequence of Pectobacterium carotovorum subsp. carotovorum PC1.</title>
        <authorList>
            <consortium name="US DOE Joint Genome Institute"/>
            <person name="Lucas S."/>
            <person name="Copeland A."/>
            <person name="Lapidus A."/>
            <person name="Glavina del Rio T."/>
            <person name="Tice H."/>
            <person name="Bruce D."/>
            <person name="Goodwin L."/>
            <person name="Pitluck S."/>
            <person name="Munk A.C."/>
            <person name="Brettin T."/>
            <person name="Detter J.C."/>
            <person name="Han C."/>
            <person name="Tapia R."/>
            <person name="Larimer F."/>
            <person name="Land M."/>
            <person name="Hauser L."/>
            <person name="Kyrpides N."/>
            <person name="Mikhailova N."/>
            <person name="Balakrishnan V."/>
            <person name="Glasner J."/>
            <person name="Perna N.T."/>
        </authorList>
    </citation>
    <scope>NUCLEOTIDE SEQUENCE [LARGE SCALE GENOMIC DNA]</scope>
    <source>
        <strain>PC1</strain>
    </source>
</reference>
<name>FLUC_PECCP</name>
<accession>C6DBV4</accession>
<keyword id="KW-0997">Cell inner membrane</keyword>
<keyword id="KW-1003">Cell membrane</keyword>
<keyword id="KW-0407">Ion channel</keyword>
<keyword id="KW-0406">Ion transport</keyword>
<keyword id="KW-0472">Membrane</keyword>
<keyword id="KW-0479">Metal-binding</keyword>
<keyword id="KW-0915">Sodium</keyword>
<keyword id="KW-0812">Transmembrane</keyword>
<keyword id="KW-1133">Transmembrane helix</keyword>
<keyword id="KW-0813">Transport</keyword>
<gene>
    <name evidence="1" type="primary">fluC</name>
    <name evidence="1" type="synonym">crcB</name>
    <name type="ordered locus">PC1_1173</name>
</gene>
<protein>
    <recommendedName>
        <fullName evidence="1">Fluoride-specific ion channel FluC</fullName>
    </recommendedName>
</protein>
<evidence type="ECO:0000255" key="1">
    <source>
        <dbReference type="HAMAP-Rule" id="MF_00454"/>
    </source>
</evidence>
<sequence>MFSTLLAVFIGGGVGSVARWQLGVKFNNLYPTLPLGTLLANLIGAFVIGGALAFFLRHPHLDQDWKILITTGLCGGLTTFSTFSAEVIMFLQSGQLAAAGLHVLLNLAGSLLMTALAFALVTWVTTH</sequence>
<organism>
    <name type="scientific">Pectobacterium carotovorum subsp. carotovorum (strain PC1)</name>
    <dbReference type="NCBI Taxonomy" id="561230"/>
    <lineage>
        <taxon>Bacteria</taxon>
        <taxon>Pseudomonadati</taxon>
        <taxon>Pseudomonadota</taxon>
        <taxon>Gammaproteobacteria</taxon>
        <taxon>Enterobacterales</taxon>
        <taxon>Pectobacteriaceae</taxon>
        <taxon>Pectobacterium</taxon>
    </lineage>
</organism>